<protein>
    <recommendedName>
        <fullName evidence="1">Ditrans,polycis-undecaprenyl-diphosphate synthase ((2E,6E)-farnesyl-diphosphate specific)</fullName>
        <ecNumber evidence="1">2.5.1.31</ecNumber>
    </recommendedName>
    <alternativeName>
        <fullName evidence="1">Ditrans,polycis-undecaprenylcistransferase</fullName>
    </alternativeName>
    <alternativeName>
        <fullName evidence="1">Undecaprenyl diphosphate synthase</fullName>
        <shortName evidence="1">UDS</shortName>
    </alternativeName>
    <alternativeName>
        <fullName evidence="1">Undecaprenyl pyrophosphate synthase</fullName>
        <shortName evidence="1">UPP synthase</shortName>
    </alternativeName>
</protein>
<reference key="1">
    <citation type="journal article" date="2003" name="Lancet">
        <title>Genome sequence of Vibrio parahaemolyticus: a pathogenic mechanism distinct from that of V. cholerae.</title>
        <authorList>
            <person name="Makino K."/>
            <person name="Oshima K."/>
            <person name="Kurokawa K."/>
            <person name="Yokoyama K."/>
            <person name="Uda T."/>
            <person name="Tagomori K."/>
            <person name="Iijima Y."/>
            <person name="Najima M."/>
            <person name="Nakano M."/>
            <person name="Yamashita A."/>
            <person name="Kubota Y."/>
            <person name="Kimura S."/>
            <person name="Yasunaga T."/>
            <person name="Honda T."/>
            <person name="Shinagawa H."/>
            <person name="Hattori M."/>
            <person name="Iida T."/>
        </authorList>
    </citation>
    <scope>NUCLEOTIDE SEQUENCE [LARGE SCALE GENOMIC DNA]</scope>
    <source>
        <strain>RIMD 2210633</strain>
    </source>
</reference>
<gene>
    <name evidence="1" type="primary">uppS</name>
    <name type="ordered locus">VP2314</name>
</gene>
<feature type="chain" id="PRO_0000123713" description="Ditrans,polycis-undecaprenyl-diphosphate synthase ((2E,6E)-farnesyl-diphosphate specific)">
    <location>
        <begin position="1"/>
        <end position="251"/>
    </location>
</feature>
<feature type="active site" evidence="1">
    <location>
        <position position="20"/>
    </location>
</feature>
<feature type="active site" description="Proton acceptor" evidence="1">
    <location>
        <position position="68"/>
    </location>
</feature>
<feature type="binding site" evidence="1">
    <location>
        <position position="20"/>
    </location>
    <ligand>
        <name>Mg(2+)</name>
        <dbReference type="ChEBI" id="CHEBI:18420"/>
    </ligand>
</feature>
<feature type="binding site" evidence="1">
    <location>
        <begin position="21"/>
        <end position="24"/>
    </location>
    <ligand>
        <name>substrate</name>
    </ligand>
</feature>
<feature type="binding site" evidence="1">
    <location>
        <position position="25"/>
    </location>
    <ligand>
        <name>substrate</name>
    </ligand>
</feature>
<feature type="binding site" evidence="1">
    <location>
        <position position="33"/>
    </location>
    <ligand>
        <name>substrate</name>
    </ligand>
</feature>
<feature type="binding site" evidence="1">
    <location>
        <position position="37"/>
    </location>
    <ligand>
        <name>substrate</name>
    </ligand>
</feature>
<feature type="binding site" evidence="1">
    <location>
        <begin position="65"/>
        <end position="67"/>
    </location>
    <ligand>
        <name>substrate</name>
    </ligand>
</feature>
<feature type="binding site" evidence="1">
    <location>
        <position position="69"/>
    </location>
    <ligand>
        <name>substrate</name>
    </ligand>
</feature>
<feature type="binding site" evidence="1">
    <location>
        <position position="71"/>
    </location>
    <ligand>
        <name>substrate</name>
    </ligand>
</feature>
<feature type="binding site" evidence="1">
    <location>
        <position position="188"/>
    </location>
    <ligand>
        <name>substrate</name>
    </ligand>
</feature>
<feature type="binding site" evidence="1">
    <location>
        <begin position="194"/>
        <end position="196"/>
    </location>
    <ligand>
        <name>substrate</name>
    </ligand>
</feature>
<feature type="binding site" evidence="1">
    <location>
        <position position="207"/>
    </location>
    <ligand>
        <name>Mg(2+)</name>
        <dbReference type="ChEBI" id="CHEBI:18420"/>
    </ligand>
</feature>
<organism>
    <name type="scientific">Vibrio parahaemolyticus serotype O3:K6 (strain RIMD 2210633)</name>
    <dbReference type="NCBI Taxonomy" id="223926"/>
    <lineage>
        <taxon>Bacteria</taxon>
        <taxon>Pseudomonadati</taxon>
        <taxon>Pseudomonadota</taxon>
        <taxon>Gammaproteobacteria</taxon>
        <taxon>Vibrionales</taxon>
        <taxon>Vibrionaceae</taxon>
        <taxon>Vibrio</taxon>
    </lineage>
</organism>
<proteinExistence type="inferred from homology"/>
<sequence>MQNSQAFSDSLPKHIAIIMDGNGRWAKSKGKPRVFGHKKGVNAVRKTVAAASKLGIKAMTLFAFSSENWRRPEEEVGLLMELFITVLSSEVKKLHKNNLQLRVIGDTSRFSERLQKKIVEAENLTASNTGMVINIAANYGGKWDITEAAKALALKARNGEIRVEDINEQLITEHLTMADLPEVDLLIRTSGECRISNFMLWQMAYAEMYFTPEFWPEFDEDSLVEAVTWFINRERRFGCTGEQVKALMTAQ</sequence>
<accession>Q87ME1</accession>
<dbReference type="EC" id="2.5.1.31" evidence="1"/>
<dbReference type="EMBL" id="BA000031">
    <property type="protein sequence ID" value="BAC60577.1"/>
    <property type="molecule type" value="Genomic_DNA"/>
</dbReference>
<dbReference type="RefSeq" id="NP_798693.1">
    <property type="nucleotide sequence ID" value="NC_004603.1"/>
</dbReference>
<dbReference type="RefSeq" id="WP_005480970.1">
    <property type="nucleotide sequence ID" value="NC_004603.1"/>
</dbReference>
<dbReference type="SMR" id="Q87ME1"/>
<dbReference type="GeneID" id="1189827"/>
<dbReference type="KEGG" id="vpa:VP2314"/>
<dbReference type="PATRIC" id="fig|223926.6.peg.2216"/>
<dbReference type="eggNOG" id="COG0020">
    <property type="taxonomic scope" value="Bacteria"/>
</dbReference>
<dbReference type="HOGENOM" id="CLU_038505_1_1_6"/>
<dbReference type="Proteomes" id="UP000002493">
    <property type="component" value="Chromosome 1"/>
</dbReference>
<dbReference type="GO" id="GO:0005829">
    <property type="term" value="C:cytosol"/>
    <property type="evidence" value="ECO:0007669"/>
    <property type="project" value="TreeGrafter"/>
</dbReference>
<dbReference type="GO" id="GO:0008834">
    <property type="term" value="F:ditrans,polycis-undecaprenyl-diphosphate synthase [(2E,6E)-farnesyl-diphosphate specific] activity"/>
    <property type="evidence" value="ECO:0007669"/>
    <property type="project" value="UniProtKB-UniRule"/>
</dbReference>
<dbReference type="GO" id="GO:0000287">
    <property type="term" value="F:magnesium ion binding"/>
    <property type="evidence" value="ECO:0007669"/>
    <property type="project" value="UniProtKB-UniRule"/>
</dbReference>
<dbReference type="GO" id="GO:0071555">
    <property type="term" value="P:cell wall organization"/>
    <property type="evidence" value="ECO:0007669"/>
    <property type="project" value="UniProtKB-KW"/>
</dbReference>
<dbReference type="GO" id="GO:0009252">
    <property type="term" value="P:peptidoglycan biosynthetic process"/>
    <property type="evidence" value="ECO:0007669"/>
    <property type="project" value="UniProtKB-UniRule"/>
</dbReference>
<dbReference type="GO" id="GO:0016094">
    <property type="term" value="P:polyprenol biosynthetic process"/>
    <property type="evidence" value="ECO:0007669"/>
    <property type="project" value="TreeGrafter"/>
</dbReference>
<dbReference type="GO" id="GO:0008360">
    <property type="term" value="P:regulation of cell shape"/>
    <property type="evidence" value="ECO:0007669"/>
    <property type="project" value="UniProtKB-KW"/>
</dbReference>
<dbReference type="CDD" id="cd00475">
    <property type="entry name" value="Cis_IPPS"/>
    <property type="match status" value="1"/>
</dbReference>
<dbReference type="FunFam" id="3.40.1180.10:FF:000001">
    <property type="entry name" value="(2E,6E)-farnesyl-diphosphate-specific ditrans,polycis-undecaprenyl-diphosphate synthase"/>
    <property type="match status" value="1"/>
</dbReference>
<dbReference type="Gene3D" id="3.40.1180.10">
    <property type="entry name" value="Decaprenyl diphosphate synthase-like"/>
    <property type="match status" value="1"/>
</dbReference>
<dbReference type="HAMAP" id="MF_01139">
    <property type="entry name" value="ISPT"/>
    <property type="match status" value="1"/>
</dbReference>
<dbReference type="InterPro" id="IPR001441">
    <property type="entry name" value="UPP_synth-like"/>
</dbReference>
<dbReference type="InterPro" id="IPR018520">
    <property type="entry name" value="UPP_synth-like_CS"/>
</dbReference>
<dbReference type="InterPro" id="IPR036424">
    <property type="entry name" value="UPP_synth-like_sf"/>
</dbReference>
<dbReference type="NCBIfam" id="NF011405">
    <property type="entry name" value="PRK14830.1"/>
    <property type="match status" value="1"/>
</dbReference>
<dbReference type="NCBIfam" id="TIGR00055">
    <property type="entry name" value="uppS"/>
    <property type="match status" value="1"/>
</dbReference>
<dbReference type="PANTHER" id="PTHR10291:SF0">
    <property type="entry name" value="DEHYDRODOLICHYL DIPHOSPHATE SYNTHASE 2"/>
    <property type="match status" value="1"/>
</dbReference>
<dbReference type="PANTHER" id="PTHR10291">
    <property type="entry name" value="DEHYDRODOLICHYL DIPHOSPHATE SYNTHASE FAMILY MEMBER"/>
    <property type="match status" value="1"/>
</dbReference>
<dbReference type="Pfam" id="PF01255">
    <property type="entry name" value="Prenyltransf"/>
    <property type="match status" value="1"/>
</dbReference>
<dbReference type="SUPFAM" id="SSF64005">
    <property type="entry name" value="Undecaprenyl diphosphate synthase"/>
    <property type="match status" value="1"/>
</dbReference>
<dbReference type="PROSITE" id="PS01066">
    <property type="entry name" value="UPP_SYNTHASE"/>
    <property type="match status" value="1"/>
</dbReference>
<name>UPPS_VIBPA</name>
<comment type="function">
    <text evidence="1">Catalyzes the sequential condensation of isopentenyl diphosphate (IPP) with (2E,6E)-farnesyl diphosphate (E,E-FPP) to yield (2Z,6Z,10Z,14Z,18Z,22Z,26Z,30Z,34E,38E)-undecaprenyl diphosphate (di-trans,octa-cis-UPP). UPP is the precursor of glycosyl carrier lipid in the biosynthesis of bacterial cell wall polysaccharide components such as peptidoglycan and lipopolysaccharide.</text>
</comment>
<comment type="catalytic activity">
    <reaction evidence="1">
        <text>8 isopentenyl diphosphate + (2E,6E)-farnesyl diphosphate = di-trans,octa-cis-undecaprenyl diphosphate + 8 diphosphate</text>
        <dbReference type="Rhea" id="RHEA:27551"/>
        <dbReference type="ChEBI" id="CHEBI:33019"/>
        <dbReference type="ChEBI" id="CHEBI:58405"/>
        <dbReference type="ChEBI" id="CHEBI:128769"/>
        <dbReference type="ChEBI" id="CHEBI:175763"/>
        <dbReference type="EC" id="2.5.1.31"/>
    </reaction>
</comment>
<comment type="cofactor">
    <cofactor evidence="1">
        <name>Mg(2+)</name>
        <dbReference type="ChEBI" id="CHEBI:18420"/>
    </cofactor>
    <text evidence="1">Binds 2 magnesium ions per subunit.</text>
</comment>
<comment type="subunit">
    <text evidence="1">Homodimer.</text>
</comment>
<comment type="similarity">
    <text evidence="1">Belongs to the UPP synthase family.</text>
</comment>
<evidence type="ECO:0000255" key="1">
    <source>
        <dbReference type="HAMAP-Rule" id="MF_01139"/>
    </source>
</evidence>
<keyword id="KW-0133">Cell shape</keyword>
<keyword id="KW-0961">Cell wall biogenesis/degradation</keyword>
<keyword id="KW-0460">Magnesium</keyword>
<keyword id="KW-0479">Metal-binding</keyword>
<keyword id="KW-0573">Peptidoglycan synthesis</keyword>
<keyword id="KW-0808">Transferase</keyword>